<reference key="1">
    <citation type="submission" date="2006-03" db="EMBL/GenBank/DDBJ databases">
        <title>Complete sequence of Rhodopseudomonas palustris BisB18.</title>
        <authorList>
            <consortium name="US DOE Joint Genome Institute"/>
            <person name="Copeland A."/>
            <person name="Lucas S."/>
            <person name="Lapidus A."/>
            <person name="Barry K."/>
            <person name="Detter J.C."/>
            <person name="Glavina del Rio T."/>
            <person name="Hammon N."/>
            <person name="Israni S."/>
            <person name="Dalin E."/>
            <person name="Tice H."/>
            <person name="Pitluck S."/>
            <person name="Chain P."/>
            <person name="Malfatti S."/>
            <person name="Shin M."/>
            <person name="Vergez L."/>
            <person name="Schmutz J."/>
            <person name="Larimer F."/>
            <person name="Land M."/>
            <person name="Hauser L."/>
            <person name="Pelletier D.A."/>
            <person name="Kyrpides N."/>
            <person name="Anderson I."/>
            <person name="Oda Y."/>
            <person name="Harwood C.S."/>
            <person name="Richardson P."/>
        </authorList>
    </citation>
    <scope>NUCLEOTIDE SEQUENCE [LARGE SCALE GENOMIC DNA]</scope>
    <source>
        <strain>BisB18</strain>
    </source>
</reference>
<name>PANC_RHOPB</name>
<comment type="function">
    <text evidence="1">Catalyzes the condensation of pantoate with beta-alanine in an ATP-dependent reaction via a pantoyl-adenylate intermediate.</text>
</comment>
<comment type="catalytic activity">
    <reaction evidence="1">
        <text>(R)-pantoate + beta-alanine + ATP = (R)-pantothenate + AMP + diphosphate + H(+)</text>
        <dbReference type="Rhea" id="RHEA:10912"/>
        <dbReference type="ChEBI" id="CHEBI:15378"/>
        <dbReference type="ChEBI" id="CHEBI:15980"/>
        <dbReference type="ChEBI" id="CHEBI:29032"/>
        <dbReference type="ChEBI" id="CHEBI:30616"/>
        <dbReference type="ChEBI" id="CHEBI:33019"/>
        <dbReference type="ChEBI" id="CHEBI:57966"/>
        <dbReference type="ChEBI" id="CHEBI:456215"/>
        <dbReference type="EC" id="6.3.2.1"/>
    </reaction>
</comment>
<comment type="pathway">
    <text evidence="1">Cofactor biosynthesis; (R)-pantothenate biosynthesis; (R)-pantothenate from (R)-pantoate and beta-alanine: step 1/1.</text>
</comment>
<comment type="subunit">
    <text evidence="1">Homodimer.</text>
</comment>
<comment type="subcellular location">
    <subcellularLocation>
        <location evidence="1">Cytoplasm</location>
    </subcellularLocation>
</comment>
<comment type="miscellaneous">
    <text evidence="1">The reaction proceeds by a bi uni uni bi ping pong mechanism.</text>
</comment>
<comment type="similarity">
    <text evidence="1">Belongs to the pantothenate synthetase family.</text>
</comment>
<comment type="sequence caution" evidence="2">
    <conflict type="erroneous initiation">
        <sequence resource="EMBL-CDS" id="ABD88874"/>
    </conflict>
</comment>
<dbReference type="EC" id="6.3.2.1" evidence="1"/>
<dbReference type="EMBL" id="CP000301">
    <property type="protein sequence ID" value="ABD88874.1"/>
    <property type="status" value="ALT_INIT"/>
    <property type="molecule type" value="Genomic_DNA"/>
</dbReference>
<dbReference type="SMR" id="Q211R2"/>
<dbReference type="STRING" id="316056.RPC_3332"/>
<dbReference type="KEGG" id="rpc:RPC_3332"/>
<dbReference type="eggNOG" id="COG0414">
    <property type="taxonomic scope" value="Bacteria"/>
</dbReference>
<dbReference type="HOGENOM" id="CLU_047148_0_0_5"/>
<dbReference type="OrthoDB" id="9773087at2"/>
<dbReference type="UniPathway" id="UPA00028">
    <property type="reaction ID" value="UER00005"/>
</dbReference>
<dbReference type="GO" id="GO:0005829">
    <property type="term" value="C:cytosol"/>
    <property type="evidence" value="ECO:0007669"/>
    <property type="project" value="TreeGrafter"/>
</dbReference>
<dbReference type="GO" id="GO:0005524">
    <property type="term" value="F:ATP binding"/>
    <property type="evidence" value="ECO:0007669"/>
    <property type="project" value="UniProtKB-KW"/>
</dbReference>
<dbReference type="GO" id="GO:0004592">
    <property type="term" value="F:pantoate-beta-alanine ligase activity"/>
    <property type="evidence" value="ECO:0007669"/>
    <property type="project" value="UniProtKB-UniRule"/>
</dbReference>
<dbReference type="GO" id="GO:0015940">
    <property type="term" value="P:pantothenate biosynthetic process"/>
    <property type="evidence" value="ECO:0007669"/>
    <property type="project" value="UniProtKB-UniRule"/>
</dbReference>
<dbReference type="CDD" id="cd00560">
    <property type="entry name" value="PanC"/>
    <property type="match status" value="1"/>
</dbReference>
<dbReference type="Gene3D" id="3.40.50.620">
    <property type="entry name" value="HUPs"/>
    <property type="match status" value="1"/>
</dbReference>
<dbReference type="Gene3D" id="3.30.1300.10">
    <property type="entry name" value="Pantoate-beta-alanine ligase, C-terminal domain"/>
    <property type="match status" value="1"/>
</dbReference>
<dbReference type="HAMAP" id="MF_00158">
    <property type="entry name" value="PanC"/>
    <property type="match status" value="1"/>
</dbReference>
<dbReference type="InterPro" id="IPR003721">
    <property type="entry name" value="Pantoate_ligase"/>
</dbReference>
<dbReference type="InterPro" id="IPR042176">
    <property type="entry name" value="Pantoate_ligase_C"/>
</dbReference>
<dbReference type="InterPro" id="IPR014729">
    <property type="entry name" value="Rossmann-like_a/b/a_fold"/>
</dbReference>
<dbReference type="NCBIfam" id="TIGR00018">
    <property type="entry name" value="panC"/>
    <property type="match status" value="1"/>
</dbReference>
<dbReference type="PANTHER" id="PTHR21299">
    <property type="entry name" value="CYTIDYLATE KINASE/PANTOATE-BETA-ALANINE LIGASE"/>
    <property type="match status" value="1"/>
</dbReference>
<dbReference type="PANTHER" id="PTHR21299:SF1">
    <property type="entry name" value="PANTOATE--BETA-ALANINE LIGASE"/>
    <property type="match status" value="1"/>
</dbReference>
<dbReference type="Pfam" id="PF02569">
    <property type="entry name" value="Pantoate_ligase"/>
    <property type="match status" value="1"/>
</dbReference>
<dbReference type="SUPFAM" id="SSF52374">
    <property type="entry name" value="Nucleotidylyl transferase"/>
    <property type="match status" value="1"/>
</dbReference>
<organism>
    <name type="scientific">Rhodopseudomonas palustris (strain BisB18)</name>
    <dbReference type="NCBI Taxonomy" id="316056"/>
    <lineage>
        <taxon>Bacteria</taxon>
        <taxon>Pseudomonadati</taxon>
        <taxon>Pseudomonadota</taxon>
        <taxon>Alphaproteobacteria</taxon>
        <taxon>Hyphomicrobiales</taxon>
        <taxon>Nitrobacteraceae</taxon>
        <taxon>Rhodopseudomonas</taxon>
    </lineage>
</organism>
<proteinExistence type="inferred from homology"/>
<keyword id="KW-0067">ATP-binding</keyword>
<keyword id="KW-0963">Cytoplasm</keyword>
<keyword id="KW-0436">Ligase</keyword>
<keyword id="KW-0547">Nucleotide-binding</keyword>
<keyword id="KW-0566">Pantothenate biosynthesis</keyword>
<protein>
    <recommendedName>
        <fullName evidence="1">Pantothenate synthetase</fullName>
        <shortName evidence="1">PS</shortName>
        <ecNumber evidence="1">6.3.2.1</ecNumber>
    </recommendedName>
    <alternativeName>
        <fullName evidence="1">Pantoate--beta-alanine ligase</fullName>
    </alternativeName>
    <alternativeName>
        <fullName evidence="1">Pantoate-activating enzyme</fullName>
    </alternativeName>
</protein>
<accession>Q211R2</accession>
<sequence>MSRSPVIVRTLPALRRALDTLRARNASLALVPTMGALHDGHVSLVRLAKRRASKVAVSIFINPAQFAPNEDFAAYPRTWKADLARLTAEKVDLIWNPDAKTMYPAGFASKILTEGPALAGLEDRFRPQFFGGVTTVVGKLFAQVRPDLALFGEKDFQQLRVVARMARDLDLGVKVVGAQIVRERDGLAMSSRNRYLSPEHRESATALCRGLKEAAKRIRAGEAIEAALAGSAALITAAGFKIDYLEARHAETLAPVASRKDGPIRLLVAATIGTTRLIDNVAV</sequence>
<gene>
    <name evidence="1" type="primary">panC</name>
    <name type="ordered locus">RPC_3332</name>
</gene>
<evidence type="ECO:0000255" key="1">
    <source>
        <dbReference type="HAMAP-Rule" id="MF_00158"/>
    </source>
</evidence>
<evidence type="ECO:0000305" key="2"/>
<feature type="chain" id="PRO_0000305534" description="Pantothenate synthetase">
    <location>
        <begin position="1"/>
        <end position="283"/>
    </location>
</feature>
<feature type="active site" description="Proton donor" evidence="1">
    <location>
        <position position="41"/>
    </location>
</feature>
<feature type="binding site" evidence="1">
    <location>
        <begin position="34"/>
        <end position="41"/>
    </location>
    <ligand>
        <name>ATP</name>
        <dbReference type="ChEBI" id="CHEBI:30616"/>
    </ligand>
</feature>
<feature type="binding site" evidence="1">
    <location>
        <position position="65"/>
    </location>
    <ligand>
        <name>(R)-pantoate</name>
        <dbReference type="ChEBI" id="CHEBI:15980"/>
    </ligand>
</feature>
<feature type="binding site" evidence="1">
    <location>
        <position position="65"/>
    </location>
    <ligand>
        <name>beta-alanine</name>
        <dbReference type="ChEBI" id="CHEBI:57966"/>
    </ligand>
</feature>
<feature type="binding site" evidence="1">
    <location>
        <begin position="152"/>
        <end position="155"/>
    </location>
    <ligand>
        <name>ATP</name>
        <dbReference type="ChEBI" id="CHEBI:30616"/>
    </ligand>
</feature>
<feature type="binding site" evidence="1">
    <location>
        <position position="158"/>
    </location>
    <ligand>
        <name>(R)-pantoate</name>
        <dbReference type="ChEBI" id="CHEBI:15980"/>
    </ligand>
</feature>
<feature type="binding site" evidence="1">
    <location>
        <position position="181"/>
    </location>
    <ligand>
        <name>ATP</name>
        <dbReference type="ChEBI" id="CHEBI:30616"/>
    </ligand>
</feature>
<feature type="binding site" evidence="1">
    <location>
        <begin position="189"/>
        <end position="192"/>
    </location>
    <ligand>
        <name>ATP</name>
        <dbReference type="ChEBI" id="CHEBI:30616"/>
    </ligand>
</feature>